<organism>
    <name type="scientific">Mus musculus</name>
    <name type="common">Mouse</name>
    <dbReference type="NCBI Taxonomy" id="10090"/>
    <lineage>
        <taxon>Eukaryota</taxon>
        <taxon>Metazoa</taxon>
        <taxon>Chordata</taxon>
        <taxon>Craniata</taxon>
        <taxon>Vertebrata</taxon>
        <taxon>Euteleostomi</taxon>
        <taxon>Mammalia</taxon>
        <taxon>Eutheria</taxon>
        <taxon>Euarchontoglires</taxon>
        <taxon>Glires</taxon>
        <taxon>Rodentia</taxon>
        <taxon>Myomorpha</taxon>
        <taxon>Muroidea</taxon>
        <taxon>Muridae</taxon>
        <taxon>Murinae</taxon>
        <taxon>Mus</taxon>
        <taxon>Mus</taxon>
    </lineage>
</organism>
<feature type="chain" id="PRO_0000144770" description="Claudin-14">
    <location>
        <begin position="1"/>
        <end position="239"/>
    </location>
</feature>
<feature type="topological domain" description="Cytoplasmic" evidence="2">
    <location>
        <begin position="1"/>
        <end position="7"/>
    </location>
</feature>
<feature type="transmembrane region" description="Helical" evidence="2">
    <location>
        <begin position="8"/>
        <end position="28"/>
    </location>
</feature>
<feature type="topological domain" description="Extracellular" evidence="2">
    <location>
        <begin position="29"/>
        <end position="81"/>
    </location>
</feature>
<feature type="transmembrane region" description="Helical" evidence="2">
    <location>
        <begin position="82"/>
        <end position="102"/>
    </location>
</feature>
<feature type="topological domain" description="Cytoplasmic" evidence="2">
    <location>
        <begin position="103"/>
        <end position="115"/>
    </location>
</feature>
<feature type="transmembrane region" description="Helical" evidence="2">
    <location>
        <begin position="116"/>
        <end position="136"/>
    </location>
</feature>
<feature type="topological domain" description="Extracellular" evidence="2">
    <location>
        <begin position="137"/>
        <end position="162"/>
    </location>
</feature>
<feature type="transmembrane region" description="Helical" evidence="2">
    <location>
        <begin position="163"/>
        <end position="183"/>
    </location>
</feature>
<feature type="topological domain" description="Cytoplasmic" evidence="2">
    <location>
        <begin position="184"/>
        <end position="239"/>
    </location>
</feature>
<feature type="sequence conflict" description="In Ref. 1; AAD17323." evidence="4" ref="1">
    <original>T</original>
    <variation>N</variation>
    <location>
        <position position="115"/>
    </location>
</feature>
<feature type="sequence conflict" description="In Ref. 4; BAB32041." evidence="4" ref="4">
    <original>V</original>
    <variation>M</variation>
    <location>
        <position position="119"/>
    </location>
</feature>
<feature type="sequence conflict" description="In Ref. 1; AAD17323." evidence="4" ref="1">
    <original>G</original>
    <variation>A</variation>
    <location>
        <position position="129"/>
    </location>
</feature>
<feature type="sequence conflict" description="In Ref. 1; AAD17323." evidence="4" ref="1">
    <original>L</original>
    <variation>M</variation>
    <location>
        <position position="166"/>
    </location>
</feature>
<feature type="sequence conflict" description="In Ref. 1; AAD17323." evidence="4" ref="1">
    <original>D</original>
    <variation>E</variation>
    <location>
        <position position="187"/>
    </location>
</feature>
<reference key="1">
    <citation type="submission" date="1999-01" db="EMBL/GenBank/DDBJ databases">
        <authorList>
            <person name="Morita K."/>
            <person name="Furuse M."/>
            <person name="Tsukita S."/>
        </authorList>
    </citation>
    <scope>NUCLEOTIDE SEQUENCE [MRNA]</scope>
    <source>
        <tissue>Liver</tissue>
    </source>
</reference>
<reference key="2">
    <citation type="journal article" date="2001" name="Cell">
        <title>Mutations in the gene encoding tight junction claudin-14 cause autosomal recessive deafness DFNB29.</title>
        <authorList>
            <person name="Wilcox E.R."/>
            <person name="Burton Q.L."/>
            <person name="Naz S."/>
            <person name="Riazuddin S."/>
            <person name="Smith T.N."/>
            <person name="Ploplis B."/>
            <person name="Belyantseva I."/>
            <person name="Ben-Yosef T."/>
            <person name="Liburd N.A."/>
            <person name="Morell R.J."/>
            <person name="Kachar B."/>
            <person name="Wu D.K."/>
            <person name="Griffith A.J."/>
            <person name="Riazuddin S."/>
            <person name="Friedman T.B."/>
        </authorList>
    </citation>
    <scope>NUCLEOTIDE SEQUENCE [MRNA]</scope>
    <scope>TISSUE SPECIFICITY</scope>
    <source>
        <tissue>Brain</tissue>
    </source>
</reference>
<reference key="3">
    <citation type="submission" date="2001-03" db="EMBL/GenBank/DDBJ databases">
        <authorList>
            <person name="Wilcox E.R."/>
            <person name="Burton Q.L."/>
            <person name="Naz S."/>
            <person name="Riazuddin S."/>
            <person name="Smith T.N."/>
            <person name="Ploplis B."/>
            <person name="Belyantseva I."/>
            <person name="Ben-Yosef T."/>
            <person name="Liburd N.A."/>
            <person name="Morell R.J."/>
            <person name="Kachar B."/>
            <person name="Wu D.K."/>
            <person name="Griffith A.J."/>
            <person name="Riazuddin S."/>
            <person name="Friedman T.B."/>
        </authorList>
    </citation>
    <scope>SEQUENCE REVISION TO 115; 129; 166 AND 187</scope>
</reference>
<reference key="4">
    <citation type="journal article" date="2005" name="Science">
        <title>The transcriptional landscape of the mammalian genome.</title>
        <authorList>
            <person name="Carninci P."/>
            <person name="Kasukawa T."/>
            <person name="Katayama S."/>
            <person name="Gough J."/>
            <person name="Frith M.C."/>
            <person name="Maeda N."/>
            <person name="Oyama R."/>
            <person name="Ravasi T."/>
            <person name="Lenhard B."/>
            <person name="Wells C."/>
            <person name="Kodzius R."/>
            <person name="Shimokawa K."/>
            <person name="Bajic V.B."/>
            <person name="Brenner S.E."/>
            <person name="Batalov S."/>
            <person name="Forrest A.R."/>
            <person name="Zavolan M."/>
            <person name="Davis M.J."/>
            <person name="Wilming L.G."/>
            <person name="Aidinis V."/>
            <person name="Allen J.E."/>
            <person name="Ambesi-Impiombato A."/>
            <person name="Apweiler R."/>
            <person name="Aturaliya R.N."/>
            <person name="Bailey T.L."/>
            <person name="Bansal M."/>
            <person name="Baxter L."/>
            <person name="Beisel K.W."/>
            <person name="Bersano T."/>
            <person name="Bono H."/>
            <person name="Chalk A.M."/>
            <person name="Chiu K.P."/>
            <person name="Choudhary V."/>
            <person name="Christoffels A."/>
            <person name="Clutterbuck D.R."/>
            <person name="Crowe M.L."/>
            <person name="Dalla E."/>
            <person name="Dalrymple B.P."/>
            <person name="de Bono B."/>
            <person name="Della Gatta G."/>
            <person name="di Bernardo D."/>
            <person name="Down T."/>
            <person name="Engstrom P."/>
            <person name="Fagiolini M."/>
            <person name="Faulkner G."/>
            <person name="Fletcher C.F."/>
            <person name="Fukushima T."/>
            <person name="Furuno M."/>
            <person name="Futaki S."/>
            <person name="Gariboldi M."/>
            <person name="Georgii-Hemming P."/>
            <person name="Gingeras T.R."/>
            <person name="Gojobori T."/>
            <person name="Green R.E."/>
            <person name="Gustincich S."/>
            <person name="Harbers M."/>
            <person name="Hayashi Y."/>
            <person name="Hensch T.K."/>
            <person name="Hirokawa N."/>
            <person name="Hill D."/>
            <person name="Huminiecki L."/>
            <person name="Iacono M."/>
            <person name="Ikeo K."/>
            <person name="Iwama A."/>
            <person name="Ishikawa T."/>
            <person name="Jakt M."/>
            <person name="Kanapin A."/>
            <person name="Katoh M."/>
            <person name="Kawasawa Y."/>
            <person name="Kelso J."/>
            <person name="Kitamura H."/>
            <person name="Kitano H."/>
            <person name="Kollias G."/>
            <person name="Krishnan S.P."/>
            <person name="Kruger A."/>
            <person name="Kummerfeld S.K."/>
            <person name="Kurochkin I.V."/>
            <person name="Lareau L.F."/>
            <person name="Lazarevic D."/>
            <person name="Lipovich L."/>
            <person name="Liu J."/>
            <person name="Liuni S."/>
            <person name="McWilliam S."/>
            <person name="Madan Babu M."/>
            <person name="Madera M."/>
            <person name="Marchionni L."/>
            <person name="Matsuda H."/>
            <person name="Matsuzawa S."/>
            <person name="Miki H."/>
            <person name="Mignone F."/>
            <person name="Miyake S."/>
            <person name="Morris K."/>
            <person name="Mottagui-Tabar S."/>
            <person name="Mulder N."/>
            <person name="Nakano N."/>
            <person name="Nakauchi H."/>
            <person name="Ng P."/>
            <person name="Nilsson R."/>
            <person name="Nishiguchi S."/>
            <person name="Nishikawa S."/>
            <person name="Nori F."/>
            <person name="Ohara O."/>
            <person name="Okazaki Y."/>
            <person name="Orlando V."/>
            <person name="Pang K.C."/>
            <person name="Pavan W.J."/>
            <person name="Pavesi G."/>
            <person name="Pesole G."/>
            <person name="Petrovsky N."/>
            <person name="Piazza S."/>
            <person name="Reed J."/>
            <person name="Reid J.F."/>
            <person name="Ring B.Z."/>
            <person name="Ringwald M."/>
            <person name="Rost B."/>
            <person name="Ruan Y."/>
            <person name="Salzberg S.L."/>
            <person name="Sandelin A."/>
            <person name="Schneider C."/>
            <person name="Schoenbach C."/>
            <person name="Sekiguchi K."/>
            <person name="Semple C.A."/>
            <person name="Seno S."/>
            <person name="Sessa L."/>
            <person name="Sheng Y."/>
            <person name="Shibata Y."/>
            <person name="Shimada H."/>
            <person name="Shimada K."/>
            <person name="Silva D."/>
            <person name="Sinclair B."/>
            <person name="Sperling S."/>
            <person name="Stupka E."/>
            <person name="Sugiura K."/>
            <person name="Sultana R."/>
            <person name="Takenaka Y."/>
            <person name="Taki K."/>
            <person name="Tammoja K."/>
            <person name="Tan S.L."/>
            <person name="Tang S."/>
            <person name="Taylor M.S."/>
            <person name="Tegner J."/>
            <person name="Teichmann S.A."/>
            <person name="Ueda H.R."/>
            <person name="van Nimwegen E."/>
            <person name="Verardo R."/>
            <person name="Wei C.L."/>
            <person name="Yagi K."/>
            <person name="Yamanishi H."/>
            <person name="Zabarovsky E."/>
            <person name="Zhu S."/>
            <person name="Zimmer A."/>
            <person name="Hide W."/>
            <person name="Bult C."/>
            <person name="Grimmond S.M."/>
            <person name="Teasdale R.D."/>
            <person name="Liu E.T."/>
            <person name="Brusic V."/>
            <person name="Quackenbush J."/>
            <person name="Wahlestedt C."/>
            <person name="Mattick J.S."/>
            <person name="Hume D.A."/>
            <person name="Kai C."/>
            <person name="Sasaki D."/>
            <person name="Tomaru Y."/>
            <person name="Fukuda S."/>
            <person name="Kanamori-Katayama M."/>
            <person name="Suzuki M."/>
            <person name="Aoki J."/>
            <person name="Arakawa T."/>
            <person name="Iida J."/>
            <person name="Imamura K."/>
            <person name="Itoh M."/>
            <person name="Kato T."/>
            <person name="Kawaji H."/>
            <person name="Kawagashira N."/>
            <person name="Kawashima T."/>
            <person name="Kojima M."/>
            <person name="Kondo S."/>
            <person name="Konno H."/>
            <person name="Nakano K."/>
            <person name="Ninomiya N."/>
            <person name="Nishio T."/>
            <person name="Okada M."/>
            <person name="Plessy C."/>
            <person name="Shibata K."/>
            <person name="Shiraki T."/>
            <person name="Suzuki S."/>
            <person name="Tagami M."/>
            <person name="Waki K."/>
            <person name="Watahiki A."/>
            <person name="Okamura-Oho Y."/>
            <person name="Suzuki H."/>
            <person name="Kawai J."/>
            <person name="Hayashizaki Y."/>
        </authorList>
    </citation>
    <scope>NUCLEOTIDE SEQUENCE [LARGE SCALE MRNA]</scope>
    <source>
        <strain>C57BL/6J</strain>
        <tissue>Colon</tissue>
    </source>
</reference>
<evidence type="ECO:0000250" key="1"/>
<evidence type="ECO:0000255" key="2"/>
<evidence type="ECO:0000269" key="3">
    <source>
    </source>
</evidence>
<evidence type="ECO:0000305" key="4"/>
<keyword id="KW-0965">Cell junction</keyword>
<keyword id="KW-1003">Cell membrane</keyword>
<keyword id="KW-0472">Membrane</keyword>
<keyword id="KW-1185">Reference proteome</keyword>
<keyword id="KW-0796">Tight junction</keyword>
<keyword id="KW-0812">Transmembrane</keyword>
<keyword id="KW-1133">Transmembrane helix</keyword>
<comment type="function">
    <text evidence="1">Plays a major role in tight junction-specific obliteration of the intercellular space, through calcium-independent cell-adhesion activity.</text>
</comment>
<comment type="interaction">
    <interactant intactId="EBI-7774956">
        <id>Q9Z0S3</id>
    </interactant>
    <interactant intactId="EBI-7774981">
        <id>Q9Y5I7</id>
        <label>CLDN16</label>
    </interactant>
    <organismsDiffer>true</organismsDiffer>
    <experiments>3</experiments>
</comment>
<comment type="subcellular location">
    <subcellularLocation>
        <location>Cell junction</location>
        <location>Tight junction</location>
    </subcellularLocation>
    <subcellularLocation>
        <location>Cell membrane</location>
        <topology>Multi-pass membrane protein</topology>
    </subcellularLocation>
</comment>
<comment type="tissue specificity">
    <text evidence="3">Expressed in all sensory epithelia of the inner ear vestibular organs, as well as in liver and kidney.</text>
</comment>
<comment type="developmental stage">
    <text>At postnatal day 4, expression is apically located in the inner and outer hair cell region of the entire organ of Corti. By postnatal day 8, expression is highest in the supporting cells of the organ of Corti.</text>
</comment>
<comment type="similarity">
    <text evidence="4">Belongs to the claudin family.</text>
</comment>
<name>CLD14_MOUSE</name>
<proteinExistence type="evidence at protein level"/>
<accession>Q9Z0S3</accession>
<accession>Q9D284</accession>
<dbReference type="EMBL" id="AF124429">
    <property type="protein sequence ID" value="AAD17323.1"/>
    <property type="molecule type" value="mRNA"/>
</dbReference>
<dbReference type="EMBL" id="AF314089">
    <property type="protein sequence ID" value="AAG60051.2"/>
    <property type="molecule type" value="mRNA"/>
</dbReference>
<dbReference type="EMBL" id="AK020255">
    <property type="protein sequence ID" value="BAB32041.1"/>
    <property type="molecule type" value="mRNA"/>
</dbReference>
<dbReference type="CCDS" id="CCDS28345.1"/>
<dbReference type="RefSeq" id="NP_001159397.1">
    <property type="nucleotide sequence ID" value="NM_001165925.1"/>
</dbReference>
<dbReference type="RefSeq" id="NP_001159398.1">
    <property type="nucleotide sequence ID" value="NM_001165926.1"/>
</dbReference>
<dbReference type="RefSeq" id="NP_062373.3">
    <property type="nucleotide sequence ID" value="NM_019500.4"/>
</dbReference>
<dbReference type="RefSeq" id="XP_006523130.1">
    <property type="nucleotide sequence ID" value="XM_006523067.5"/>
</dbReference>
<dbReference type="RefSeq" id="XP_036015927.1">
    <property type="nucleotide sequence ID" value="XM_036160034.1"/>
</dbReference>
<dbReference type="SMR" id="Q9Z0S3"/>
<dbReference type="FunCoup" id="Q9Z0S3">
    <property type="interactions" value="257"/>
</dbReference>
<dbReference type="IntAct" id="Q9Z0S3">
    <property type="interactions" value="2"/>
</dbReference>
<dbReference type="MINT" id="Q9Z0S3"/>
<dbReference type="STRING" id="10090.ENSMUSP00000062045"/>
<dbReference type="iPTMnet" id="Q9Z0S3"/>
<dbReference type="PhosphoSitePlus" id="Q9Z0S3"/>
<dbReference type="PaxDb" id="10090-ENSMUSP00000062045"/>
<dbReference type="ProteomicsDB" id="283577"/>
<dbReference type="Antibodypedia" id="23104">
    <property type="antibodies" value="243 antibodies from 31 providers"/>
</dbReference>
<dbReference type="DNASU" id="56173"/>
<dbReference type="Ensembl" id="ENSMUST00000050962.5">
    <property type="protein sequence ID" value="ENSMUSP00000062045.5"/>
    <property type="gene ID" value="ENSMUSG00000047109.14"/>
</dbReference>
<dbReference type="Ensembl" id="ENSMUST00000169391.8">
    <property type="protein sequence ID" value="ENSMUSP00000126455.2"/>
    <property type="gene ID" value="ENSMUSG00000047109.14"/>
</dbReference>
<dbReference type="Ensembl" id="ENSMUST00000177648.8">
    <property type="protein sequence ID" value="ENSMUSP00000136156.2"/>
    <property type="gene ID" value="ENSMUSG00000047109.14"/>
</dbReference>
<dbReference type="GeneID" id="56173"/>
<dbReference type="KEGG" id="mmu:56173"/>
<dbReference type="UCSC" id="uc008aad.2">
    <property type="organism name" value="mouse"/>
</dbReference>
<dbReference type="AGR" id="MGI:1860425"/>
<dbReference type="CTD" id="23562"/>
<dbReference type="MGI" id="MGI:1860425">
    <property type="gene designation" value="Cldn14"/>
</dbReference>
<dbReference type="VEuPathDB" id="HostDB:ENSMUSG00000047109"/>
<dbReference type="eggNOG" id="ENOG502QR8Z">
    <property type="taxonomic scope" value="Eukaryota"/>
</dbReference>
<dbReference type="GeneTree" id="ENSGT00940000161312"/>
<dbReference type="HOGENOM" id="CLU_076370_1_1_1"/>
<dbReference type="InParanoid" id="Q9Z0S3"/>
<dbReference type="OMA" id="PTAYKDN"/>
<dbReference type="OrthoDB" id="8749238at2759"/>
<dbReference type="PhylomeDB" id="Q9Z0S3"/>
<dbReference type="TreeFam" id="TF331936"/>
<dbReference type="BioGRID-ORCS" id="56173">
    <property type="hits" value="1 hit in 79 CRISPR screens"/>
</dbReference>
<dbReference type="PRO" id="PR:Q9Z0S3"/>
<dbReference type="Proteomes" id="UP000000589">
    <property type="component" value="Chromosome 16"/>
</dbReference>
<dbReference type="RNAct" id="Q9Z0S3">
    <property type="molecule type" value="protein"/>
</dbReference>
<dbReference type="Bgee" id="ENSMUSG00000047109">
    <property type="expression patterns" value="Expressed in lumbar subsegment of spinal cord and 101 other cell types or tissues"/>
</dbReference>
<dbReference type="ExpressionAtlas" id="Q9Z0S3">
    <property type="expression patterns" value="baseline and differential"/>
</dbReference>
<dbReference type="GO" id="GO:0005923">
    <property type="term" value="C:bicellular tight junction"/>
    <property type="evidence" value="ECO:0000314"/>
    <property type="project" value="MGI"/>
</dbReference>
<dbReference type="GO" id="GO:0005886">
    <property type="term" value="C:plasma membrane"/>
    <property type="evidence" value="ECO:0000314"/>
    <property type="project" value="MGI"/>
</dbReference>
<dbReference type="GO" id="GO:0042802">
    <property type="term" value="F:identical protein binding"/>
    <property type="evidence" value="ECO:0000250"/>
    <property type="project" value="UniProtKB"/>
</dbReference>
<dbReference type="GO" id="GO:0005198">
    <property type="term" value="F:structural molecule activity"/>
    <property type="evidence" value="ECO:0007669"/>
    <property type="project" value="InterPro"/>
</dbReference>
<dbReference type="GO" id="GO:0016338">
    <property type="term" value="P:calcium-independent cell-cell adhesion via plasma membrane cell-adhesion molecules"/>
    <property type="evidence" value="ECO:0000250"/>
    <property type="project" value="UniProtKB"/>
</dbReference>
<dbReference type="FunFam" id="1.20.140.150:FF:000001">
    <property type="entry name" value="Claudin"/>
    <property type="match status" value="1"/>
</dbReference>
<dbReference type="Gene3D" id="1.20.140.150">
    <property type="match status" value="1"/>
</dbReference>
<dbReference type="InterPro" id="IPR006187">
    <property type="entry name" value="Claudin"/>
</dbReference>
<dbReference type="InterPro" id="IPR017974">
    <property type="entry name" value="Claudin_CS"/>
</dbReference>
<dbReference type="InterPro" id="IPR004031">
    <property type="entry name" value="PMP22/EMP/MP20/Claudin"/>
</dbReference>
<dbReference type="PANTHER" id="PTHR12002">
    <property type="entry name" value="CLAUDIN"/>
    <property type="match status" value="1"/>
</dbReference>
<dbReference type="Pfam" id="PF00822">
    <property type="entry name" value="PMP22_Claudin"/>
    <property type="match status" value="1"/>
</dbReference>
<dbReference type="PRINTS" id="PR01077">
    <property type="entry name" value="CLAUDIN"/>
</dbReference>
<dbReference type="PRINTS" id="PR01385">
    <property type="entry name" value="CLAUDIN14"/>
</dbReference>
<dbReference type="PROSITE" id="PS01346">
    <property type="entry name" value="CLAUDIN"/>
    <property type="match status" value="1"/>
</dbReference>
<sequence>MASTAVQLLGFLLSFLGMVGTLITTILPHWRRTAHVGTNILTAVSYLKGLWMECVWHSTGIYQCQIYRSLLALPRDLQAARALMVISCLLSGMACACAVVGMKCTRCAKGTPAKTTFAVLGGALFLLAGLLCMVAVSWTTNDVVQNFYNPLLPSGMKFEIGQALYLGFISSSLSLIGGTLLCLSCQDEAPYRPYPPQSRAGATTTATAPAYRPPAAYKDNRAPSVTSAAHSGYRLNDYV</sequence>
<protein>
    <recommendedName>
        <fullName>Claudin-14</fullName>
    </recommendedName>
</protein>
<gene>
    <name type="primary">Cldn14</name>
</gene>